<proteinExistence type="inferred from homology"/>
<feature type="chain" id="PRO_1000204778" description="Nucleoid-associated protein RER_03900">
    <location>
        <begin position="1"/>
        <end position="112"/>
    </location>
</feature>
<gene>
    <name type="ordered locus">RER_03900</name>
</gene>
<name>Y390_RHOE4</name>
<accession>C0ZN46</accession>
<sequence>MQPGGAPDMSALLAQAQQMQQQLMAAQQEMAQAEVTGQAGGGLVVATVKGTGEVVGLQIDPKVVDPEDVETLQDLVIGAIEDASRKAQEVAAEKLGPLAGGLGGGLPGLPGF</sequence>
<evidence type="ECO:0000255" key="1">
    <source>
        <dbReference type="HAMAP-Rule" id="MF_00274"/>
    </source>
</evidence>
<comment type="function">
    <text evidence="1">Binds to DNA and alters its conformation. May be involved in regulation of gene expression, nucleoid organization and DNA protection.</text>
</comment>
<comment type="subunit">
    <text evidence="1">Homodimer.</text>
</comment>
<comment type="subcellular location">
    <subcellularLocation>
        <location evidence="1">Cytoplasm</location>
        <location evidence="1">Nucleoid</location>
    </subcellularLocation>
</comment>
<comment type="similarity">
    <text evidence="1">Belongs to the YbaB/EbfC family.</text>
</comment>
<organism>
    <name type="scientific">Rhodococcus erythropolis (strain PR4 / NBRC 100887)</name>
    <dbReference type="NCBI Taxonomy" id="234621"/>
    <lineage>
        <taxon>Bacteria</taxon>
        <taxon>Bacillati</taxon>
        <taxon>Actinomycetota</taxon>
        <taxon>Actinomycetes</taxon>
        <taxon>Mycobacteriales</taxon>
        <taxon>Nocardiaceae</taxon>
        <taxon>Rhodococcus</taxon>
        <taxon>Rhodococcus erythropolis group</taxon>
    </lineage>
</organism>
<dbReference type="EMBL" id="AP008957">
    <property type="protein sequence ID" value="BAH31098.1"/>
    <property type="molecule type" value="Genomic_DNA"/>
</dbReference>
<dbReference type="RefSeq" id="WP_003943929.1">
    <property type="nucleotide sequence ID" value="NC_012490.1"/>
</dbReference>
<dbReference type="SMR" id="C0ZN46"/>
<dbReference type="KEGG" id="rer:RER_03900"/>
<dbReference type="eggNOG" id="COG0718">
    <property type="taxonomic scope" value="Bacteria"/>
</dbReference>
<dbReference type="HOGENOM" id="CLU_140930_4_0_11"/>
<dbReference type="Proteomes" id="UP000002204">
    <property type="component" value="Chromosome"/>
</dbReference>
<dbReference type="GO" id="GO:0043590">
    <property type="term" value="C:bacterial nucleoid"/>
    <property type="evidence" value="ECO:0007669"/>
    <property type="project" value="UniProtKB-UniRule"/>
</dbReference>
<dbReference type="GO" id="GO:0005829">
    <property type="term" value="C:cytosol"/>
    <property type="evidence" value="ECO:0007669"/>
    <property type="project" value="TreeGrafter"/>
</dbReference>
<dbReference type="GO" id="GO:0003677">
    <property type="term" value="F:DNA binding"/>
    <property type="evidence" value="ECO:0007669"/>
    <property type="project" value="UniProtKB-UniRule"/>
</dbReference>
<dbReference type="Gene3D" id="3.30.1310.10">
    <property type="entry name" value="Nucleoid-associated protein YbaB-like domain"/>
    <property type="match status" value="1"/>
</dbReference>
<dbReference type="HAMAP" id="MF_00274">
    <property type="entry name" value="DNA_YbaB_EbfC"/>
    <property type="match status" value="1"/>
</dbReference>
<dbReference type="InterPro" id="IPR036894">
    <property type="entry name" value="YbaB-like_sf"/>
</dbReference>
<dbReference type="InterPro" id="IPR004401">
    <property type="entry name" value="YbaB/EbfC"/>
</dbReference>
<dbReference type="NCBIfam" id="TIGR00103">
    <property type="entry name" value="DNA_YbaB_EbfC"/>
    <property type="match status" value="1"/>
</dbReference>
<dbReference type="PANTHER" id="PTHR33449">
    <property type="entry name" value="NUCLEOID-ASSOCIATED PROTEIN YBAB"/>
    <property type="match status" value="1"/>
</dbReference>
<dbReference type="PANTHER" id="PTHR33449:SF1">
    <property type="entry name" value="NUCLEOID-ASSOCIATED PROTEIN YBAB"/>
    <property type="match status" value="1"/>
</dbReference>
<dbReference type="Pfam" id="PF02575">
    <property type="entry name" value="YbaB_DNA_bd"/>
    <property type="match status" value="1"/>
</dbReference>
<dbReference type="PIRSF" id="PIRSF004555">
    <property type="entry name" value="UCP004555"/>
    <property type="match status" value="1"/>
</dbReference>
<dbReference type="SUPFAM" id="SSF82607">
    <property type="entry name" value="YbaB-like"/>
    <property type="match status" value="1"/>
</dbReference>
<keyword id="KW-0963">Cytoplasm</keyword>
<keyword id="KW-0238">DNA-binding</keyword>
<protein>
    <recommendedName>
        <fullName evidence="1">Nucleoid-associated protein RER_03900</fullName>
    </recommendedName>
</protein>
<reference key="1">
    <citation type="submission" date="2005-03" db="EMBL/GenBank/DDBJ databases">
        <title>Comparison of the complete genome sequences of Rhodococcus erythropolis PR4 and Rhodococcus opacus B4.</title>
        <authorList>
            <person name="Takarada H."/>
            <person name="Sekine M."/>
            <person name="Hosoyama A."/>
            <person name="Yamada R."/>
            <person name="Fujisawa T."/>
            <person name="Omata S."/>
            <person name="Shimizu A."/>
            <person name="Tsukatani N."/>
            <person name="Tanikawa S."/>
            <person name="Fujita N."/>
            <person name="Harayama S."/>
        </authorList>
    </citation>
    <scope>NUCLEOTIDE SEQUENCE [LARGE SCALE GENOMIC DNA]</scope>
    <source>
        <strain>PR4 / NBRC 100887</strain>
    </source>
</reference>